<reference key="1">
    <citation type="journal article" date="2011" name="Plant Cell Physiol.">
        <title>Expression and genome-wide analysis of the xylogen-type gene family.</title>
        <authorList>
            <person name="Kobayashi Y."/>
            <person name="Motose H."/>
            <person name="Iwamoto K."/>
            <person name="Fukuda H."/>
        </authorList>
    </citation>
    <scope>NUCLEOTIDE SEQUENCE [MRNA]</scope>
    <scope>TISSUE SPECIFICITY</scope>
    <scope>GENE FAMILY</scope>
    <scope>NOMENCLATURE</scope>
    <source>
        <strain>cv. Columbia</strain>
    </source>
</reference>
<reference key="2">
    <citation type="journal article" date="2000" name="Nature">
        <title>Sequence and analysis of chromosome 1 of the plant Arabidopsis thaliana.</title>
        <authorList>
            <person name="Theologis A."/>
            <person name="Ecker J.R."/>
            <person name="Palm C.J."/>
            <person name="Federspiel N.A."/>
            <person name="Kaul S."/>
            <person name="White O."/>
            <person name="Alonso J."/>
            <person name="Altafi H."/>
            <person name="Araujo R."/>
            <person name="Bowman C.L."/>
            <person name="Brooks S.Y."/>
            <person name="Buehler E."/>
            <person name="Chan A."/>
            <person name="Chao Q."/>
            <person name="Chen H."/>
            <person name="Cheuk R.F."/>
            <person name="Chin C.W."/>
            <person name="Chung M.K."/>
            <person name="Conn L."/>
            <person name="Conway A.B."/>
            <person name="Conway A.R."/>
            <person name="Creasy T.H."/>
            <person name="Dewar K."/>
            <person name="Dunn P."/>
            <person name="Etgu P."/>
            <person name="Feldblyum T.V."/>
            <person name="Feng J.-D."/>
            <person name="Fong B."/>
            <person name="Fujii C.Y."/>
            <person name="Gill J.E."/>
            <person name="Goldsmith A.D."/>
            <person name="Haas B."/>
            <person name="Hansen N.F."/>
            <person name="Hughes B."/>
            <person name="Huizar L."/>
            <person name="Hunter J.L."/>
            <person name="Jenkins J."/>
            <person name="Johnson-Hopson C."/>
            <person name="Khan S."/>
            <person name="Khaykin E."/>
            <person name="Kim C.J."/>
            <person name="Koo H.L."/>
            <person name="Kremenetskaia I."/>
            <person name="Kurtz D.B."/>
            <person name="Kwan A."/>
            <person name="Lam B."/>
            <person name="Langin-Hooper S."/>
            <person name="Lee A."/>
            <person name="Lee J.M."/>
            <person name="Lenz C.A."/>
            <person name="Li J.H."/>
            <person name="Li Y.-P."/>
            <person name="Lin X."/>
            <person name="Liu S.X."/>
            <person name="Liu Z.A."/>
            <person name="Luros J.S."/>
            <person name="Maiti R."/>
            <person name="Marziali A."/>
            <person name="Militscher J."/>
            <person name="Miranda M."/>
            <person name="Nguyen M."/>
            <person name="Nierman W.C."/>
            <person name="Osborne B.I."/>
            <person name="Pai G."/>
            <person name="Peterson J."/>
            <person name="Pham P.K."/>
            <person name="Rizzo M."/>
            <person name="Rooney T."/>
            <person name="Rowley D."/>
            <person name="Sakano H."/>
            <person name="Salzberg S.L."/>
            <person name="Schwartz J.R."/>
            <person name="Shinn P."/>
            <person name="Southwick A.M."/>
            <person name="Sun H."/>
            <person name="Tallon L.J."/>
            <person name="Tambunga G."/>
            <person name="Toriumi M.J."/>
            <person name="Town C.D."/>
            <person name="Utterback T."/>
            <person name="Van Aken S."/>
            <person name="Vaysberg M."/>
            <person name="Vysotskaia V.S."/>
            <person name="Walker M."/>
            <person name="Wu D."/>
            <person name="Yu G."/>
            <person name="Fraser C.M."/>
            <person name="Venter J.C."/>
            <person name="Davis R.W."/>
        </authorList>
    </citation>
    <scope>NUCLEOTIDE SEQUENCE [LARGE SCALE GENOMIC DNA]</scope>
    <source>
        <strain>cv. Columbia</strain>
    </source>
</reference>
<reference key="3">
    <citation type="journal article" date="2017" name="Plant J.">
        <title>Araport11: a complete reannotation of the Arabidopsis thaliana reference genome.</title>
        <authorList>
            <person name="Cheng C.Y."/>
            <person name="Krishnakumar V."/>
            <person name="Chan A.P."/>
            <person name="Thibaud-Nissen F."/>
            <person name="Schobel S."/>
            <person name="Town C.D."/>
        </authorList>
    </citation>
    <scope>GENOME REANNOTATION</scope>
    <source>
        <strain>cv. Columbia</strain>
    </source>
</reference>
<reference key="4">
    <citation type="journal article" date="2013" name="Plant Mol. Biol.">
        <title>Coexpression patterns indicate that GPI-anchored non-specific lipid transfer proteins are involved in accumulation of cuticular wax, suberin and sporopollenin.</title>
        <authorList>
            <person name="Edstam M.M."/>
            <person name="Blomqvist K."/>
            <person name="Ekloef A."/>
            <person name="Wennergren U."/>
            <person name="Edqvist J."/>
        </authorList>
    </citation>
    <scope>TISSUE SPECIFICITY</scope>
    <scope>GENE FAMILY</scope>
    <scope>NOMENCLATURE</scope>
    <source>
        <strain>cv. Columbia</strain>
    </source>
</reference>
<gene>
    <name evidence="9" type="primary">LTPG23</name>
    <name evidence="8" type="synonym">XYLP5</name>
    <name evidence="8" type="synonym">XYP13</name>
    <name evidence="11" type="ordered locus">At1g36150</name>
    <name evidence="12" type="ORF">F5J5.27</name>
</gene>
<sequence length="256" mass="25907">MKPSFVLLSIVLLLSSSLSDAADFGSPSQPPSMAPTPQPSNSTDCSSVIYSMVDCLSFLTVGSTDPSPTKTCCVGVKTVLNYSPKCLCSALESSREMGFVLDDTKALAMPKICNVPIDPNCDVSTPAASTPVSPPVESPTTSPSSAKSPAITPSSPAVSHSPPPVRHSSPPVSHSSPPVSHSSPPTSRSSPAVSHSSPVVAASSPVKAVSSSTASSPRAASPSPSPSPSISSSGILLVSKLFIAVVMVSSFLYILA</sequence>
<accession>Q2PE60</accession>
<name>LTG23_ARATH</name>
<proteinExistence type="evidence at transcript level"/>
<comment type="function">
    <text evidence="2">Probable lipid transfer protein.</text>
</comment>
<comment type="subcellular location">
    <subcellularLocation>
        <location evidence="3">Cell membrane</location>
        <topology evidence="3">Lipid-anchor</topology>
        <topology evidence="3">GPI-anchor</topology>
    </subcellularLocation>
</comment>
<comment type="tissue specificity">
    <text evidence="6 7">Confined to the anthers of the inflorescence.</text>
</comment>
<comment type="similarity">
    <text evidence="10">Belongs to the plant LTP family.</text>
</comment>
<evidence type="ECO:0000250" key="1">
    <source>
        <dbReference type="UniProtKB" id="A0A0B4JDK1"/>
    </source>
</evidence>
<evidence type="ECO:0000250" key="2">
    <source>
        <dbReference type="UniProtKB" id="Q9C7F7"/>
    </source>
</evidence>
<evidence type="ECO:0000255" key="3"/>
<evidence type="ECO:0000255" key="4">
    <source>
        <dbReference type="PROSITE-ProRule" id="PRU00498"/>
    </source>
</evidence>
<evidence type="ECO:0000256" key="5">
    <source>
        <dbReference type="SAM" id="MobiDB-lite"/>
    </source>
</evidence>
<evidence type="ECO:0000269" key="6">
    <source>
    </source>
</evidence>
<evidence type="ECO:0000269" key="7">
    <source>
    </source>
</evidence>
<evidence type="ECO:0000303" key="8">
    <source>
    </source>
</evidence>
<evidence type="ECO:0000303" key="9">
    <source>
    </source>
</evidence>
<evidence type="ECO:0000305" key="10"/>
<evidence type="ECO:0000312" key="11">
    <source>
        <dbReference type="Araport" id="AT1G36150"/>
    </source>
</evidence>
<evidence type="ECO:0000312" key="12">
    <source>
        <dbReference type="EMBL" id="AEE31848.1"/>
    </source>
</evidence>
<organism>
    <name type="scientific">Arabidopsis thaliana</name>
    <name type="common">Mouse-ear cress</name>
    <dbReference type="NCBI Taxonomy" id="3702"/>
    <lineage>
        <taxon>Eukaryota</taxon>
        <taxon>Viridiplantae</taxon>
        <taxon>Streptophyta</taxon>
        <taxon>Embryophyta</taxon>
        <taxon>Tracheophyta</taxon>
        <taxon>Spermatophyta</taxon>
        <taxon>Magnoliopsida</taxon>
        <taxon>eudicotyledons</taxon>
        <taxon>Gunneridae</taxon>
        <taxon>Pentapetalae</taxon>
        <taxon>rosids</taxon>
        <taxon>malvids</taxon>
        <taxon>Brassicales</taxon>
        <taxon>Brassicaceae</taxon>
        <taxon>Camelineae</taxon>
        <taxon>Arabidopsis</taxon>
    </lineage>
</organism>
<protein>
    <recommendedName>
        <fullName evidence="9">Non-specific lipid transfer protein GPI-anchored 23</fullName>
        <shortName evidence="9">AtLTPG-23</shortName>
        <shortName evidence="9">Protein LTP-GPI-ANCHORED 23</shortName>
    </recommendedName>
    <alternativeName>
        <fullName evidence="8">Xylogen-like protein 5</fullName>
        <shortName evidence="8">AtXYLP5</shortName>
        <shortName evidence="8">AtXYP13</shortName>
    </alternativeName>
</protein>
<keyword id="KW-1003">Cell membrane</keyword>
<keyword id="KW-1015">Disulfide bond</keyword>
<keyword id="KW-0325">Glycoprotein</keyword>
<keyword id="KW-0336">GPI-anchor</keyword>
<keyword id="KW-0449">Lipoprotein</keyword>
<keyword id="KW-0472">Membrane</keyword>
<keyword id="KW-1185">Reference proteome</keyword>
<keyword id="KW-0732">Signal</keyword>
<keyword id="KW-0812">Transmembrane</keyword>
<keyword id="KW-1133">Transmembrane helix</keyword>
<dbReference type="EMBL" id="AB246332">
    <property type="protein sequence ID" value="BAE73269.1"/>
    <property type="molecule type" value="mRNA"/>
</dbReference>
<dbReference type="EMBL" id="AC006228">
    <property type="status" value="NOT_ANNOTATED_CDS"/>
    <property type="molecule type" value="Genomic_DNA"/>
</dbReference>
<dbReference type="EMBL" id="CP002684">
    <property type="protein sequence ID" value="AEE31848.1"/>
    <property type="molecule type" value="Genomic_DNA"/>
</dbReference>
<dbReference type="RefSeq" id="NP_174848.1">
    <property type="nucleotide sequence ID" value="NM_103312.1"/>
</dbReference>
<dbReference type="SMR" id="Q2PE60"/>
<dbReference type="STRING" id="3702.Q2PE60"/>
<dbReference type="GlyCosmos" id="Q2PE60">
    <property type="glycosylation" value="1 site, No reported glycans"/>
</dbReference>
<dbReference type="GlyGen" id="Q2PE60">
    <property type="glycosylation" value="1 site"/>
</dbReference>
<dbReference type="PaxDb" id="3702-AT1G36150.1"/>
<dbReference type="ProteomicsDB" id="185081"/>
<dbReference type="EnsemblPlants" id="AT1G36150.1">
    <property type="protein sequence ID" value="AT1G36150.1"/>
    <property type="gene ID" value="AT1G36150"/>
</dbReference>
<dbReference type="GeneID" id="840520"/>
<dbReference type="Gramene" id="AT1G36150.1">
    <property type="protein sequence ID" value="AT1G36150.1"/>
    <property type="gene ID" value="AT1G36150"/>
</dbReference>
<dbReference type="KEGG" id="ath:AT1G36150"/>
<dbReference type="Araport" id="AT1G36150"/>
<dbReference type="TAIR" id="AT1G36150">
    <property type="gene designation" value="LTPG33"/>
</dbReference>
<dbReference type="eggNOG" id="ENOG502S0AW">
    <property type="taxonomic scope" value="Eukaryota"/>
</dbReference>
<dbReference type="HOGENOM" id="CLU_095117_0_0_1"/>
<dbReference type="InParanoid" id="Q2PE60"/>
<dbReference type="OMA" id="PSEYGME"/>
<dbReference type="PRO" id="PR:Q2PE60"/>
<dbReference type="Proteomes" id="UP000006548">
    <property type="component" value="Chromosome 1"/>
</dbReference>
<dbReference type="ExpressionAtlas" id="Q2PE60">
    <property type="expression patterns" value="baseline and differential"/>
</dbReference>
<dbReference type="GO" id="GO:0005886">
    <property type="term" value="C:plasma membrane"/>
    <property type="evidence" value="ECO:0007669"/>
    <property type="project" value="UniProtKB-SubCell"/>
</dbReference>
<dbReference type="GO" id="GO:0098552">
    <property type="term" value="C:side of membrane"/>
    <property type="evidence" value="ECO:0007669"/>
    <property type="project" value="UniProtKB-KW"/>
</dbReference>
<dbReference type="GO" id="GO:0008289">
    <property type="term" value="F:lipid binding"/>
    <property type="evidence" value="ECO:0007669"/>
    <property type="project" value="InterPro"/>
</dbReference>
<dbReference type="GO" id="GO:0006869">
    <property type="term" value="P:lipid transport"/>
    <property type="evidence" value="ECO:0007669"/>
    <property type="project" value="InterPro"/>
</dbReference>
<dbReference type="CDD" id="cd00010">
    <property type="entry name" value="AAI_LTSS"/>
    <property type="match status" value="1"/>
</dbReference>
<dbReference type="FunFam" id="1.10.110.10:FF:000001">
    <property type="entry name" value="Bifunctional inhibitor/lipid-transfer protein/seed storage 2S albumin superfamily protein"/>
    <property type="match status" value="1"/>
</dbReference>
<dbReference type="Gene3D" id="1.10.110.10">
    <property type="entry name" value="Plant lipid-transfer and hydrophobic proteins"/>
    <property type="match status" value="1"/>
</dbReference>
<dbReference type="InterPro" id="IPR036312">
    <property type="entry name" value="Bifun_inhib/LTP/seed_sf"/>
</dbReference>
<dbReference type="InterPro" id="IPR016140">
    <property type="entry name" value="Bifunc_inhib/LTP/seed_store"/>
</dbReference>
<dbReference type="InterPro" id="IPR043325">
    <property type="entry name" value="LTSS"/>
</dbReference>
<dbReference type="InterPro" id="IPR000528">
    <property type="entry name" value="Plant_nsLTP"/>
</dbReference>
<dbReference type="PANTHER" id="PTHR33044">
    <property type="entry name" value="BIFUNCTIONAL INHIBITOR/LIPID-TRANSFER PROTEIN/SEED STORAGE 2S ALBUMIN SUPERFAMILY PROTEIN-RELATED"/>
    <property type="match status" value="1"/>
</dbReference>
<dbReference type="Pfam" id="PF14368">
    <property type="entry name" value="LTP_2"/>
    <property type="match status" value="1"/>
</dbReference>
<dbReference type="PRINTS" id="PR00382">
    <property type="entry name" value="LIPIDTRNSFER"/>
</dbReference>
<dbReference type="SMART" id="SM00499">
    <property type="entry name" value="AAI"/>
    <property type="match status" value="1"/>
</dbReference>
<dbReference type="SUPFAM" id="SSF47699">
    <property type="entry name" value="Bifunctional inhibitor/lipid-transfer protein/seed storage 2S albumin"/>
    <property type="match status" value="1"/>
</dbReference>
<feature type="signal peptide" evidence="3">
    <location>
        <begin position="1"/>
        <end position="21"/>
    </location>
</feature>
<feature type="chain" id="PRO_5014308748" description="Non-specific lipid transfer protein GPI-anchored 23">
    <location>
        <begin position="22"/>
        <end position="225"/>
    </location>
</feature>
<feature type="propeptide" id="PRO_0000451654" description="Removed in mature form" evidence="3">
    <location>
        <begin position="226"/>
        <end position="256"/>
    </location>
</feature>
<feature type="region of interest" description="Disordered" evidence="5">
    <location>
        <begin position="125"/>
        <end position="230"/>
    </location>
</feature>
<feature type="compositionally biased region" description="Low complexity" evidence="5">
    <location>
        <begin position="138"/>
        <end position="230"/>
    </location>
</feature>
<feature type="lipid moiety-binding region" description="GPI-anchor amidated serine" evidence="3">
    <location>
        <position position="225"/>
    </location>
</feature>
<feature type="glycosylation site" description="N-linked (GlcNAc...) asparagine" evidence="4">
    <location>
        <position position="41"/>
    </location>
</feature>
<feature type="disulfide bond" evidence="1">
    <location>
        <begin position="45"/>
        <end position="88"/>
    </location>
</feature>
<feature type="disulfide bond" evidence="1">
    <location>
        <begin position="55"/>
        <end position="72"/>
    </location>
</feature>
<feature type="disulfide bond" evidence="1">
    <location>
        <begin position="73"/>
        <end position="113"/>
    </location>
</feature>
<feature type="disulfide bond" evidence="1">
    <location>
        <begin position="86"/>
        <end position="121"/>
    </location>
</feature>